<feature type="chain" id="PRO_0000379579" description="Uncharacterized tRNA/rRNA methyltransferase Mkms_4822">
    <location>
        <begin position="1"/>
        <end position="314"/>
    </location>
</feature>
<feature type="region of interest" description="Disordered" evidence="2">
    <location>
        <begin position="1"/>
        <end position="73"/>
    </location>
</feature>
<feature type="compositionally biased region" description="Basic residues" evidence="2">
    <location>
        <begin position="1"/>
        <end position="16"/>
    </location>
</feature>
<feature type="compositionally biased region" description="Basic residues" evidence="2">
    <location>
        <begin position="49"/>
        <end position="65"/>
    </location>
</feature>
<feature type="binding site" evidence="1">
    <location>
        <position position="266"/>
    </location>
    <ligand>
        <name>S-adenosyl-L-methionine</name>
        <dbReference type="ChEBI" id="CHEBI:59789"/>
    </ligand>
</feature>
<feature type="binding site" evidence="1">
    <location>
        <position position="286"/>
    </location>
    <ligand>
        <name>S-adenosyl-L-methionine</name>
        <dbReference type="ChEBI" id="CHEBI:59789"/>
    </ligand>
</feature>
<feature type="binding site" evidence="1">
    <location>
        <position position="295"/>
    </location>
    <ligand>
        <name>S-adenosyl-L-methionine</name>
        <dbReference type="ChEBI" id="CHEBI:59789"/>
    </ligand>
</feature>
<comment type="similarity">
    <text evidence="3">Belongs to the class IV-like SAM-binding methyltransferase superfamily. RNA methyltransferase TrmH family.</text>
</comment>
<reference key="1">
    <citation type="submission" date="2006-12" db="EMBL/GenBank/DDBJ databases">
        <title>Complete sequence of chromosome of Mycobacterium sp. KMS.</title>
        <authorList>
            <consortium name="US DOE Joint Genome Institute"/>
            <person name="Copeland A."/>
            <person name="Lucas S."/>
            <person name="Lapidus A."/>
            <person name="Barry K."/>
            <person name="Detter J.C."/>
            <person name="Glavina del Rio T."/>
            <person name="Hammon N."/>
            <person name="Israni S."/>
            <person name="Dalin E."/>
            <person name="Tice H."/>
            <person name="Pitluck S."/>
            <person name="Kiss H."/>
            <person name="Brettin T."/>
            <person name="Bruce D."/>
            <person name="Han C."/>
            <person name="Tapia R."/>
            <person name="Gilna P."/>
            <person name="Schmutz J."/>
            <person name="Larimer F."/>
            <person name="Land M."/>
            <person name="Hauser L."/>
            <person name="Kyrpides N."/>
            <person name="Mikhailova N."/>
            <person name="Miller C.D."/>
            <person name="Richardson P."/>
        </authorList>
    </citation>
    <scope>NUCLEOTIDE SEQUENCE [LARGE SCALE GENOMIC DNA]</scope>
    <source>
        <strain>KMS</strain>
    </source>
</reference>
<proteinExistence type="inferred from homology"/>
<keyword id="KW-0489">Methyltransferase</keyword>
<keyword id="KW-0949">S-adenosyl-L-methionine</keyword>
<keyword id="KW-0808">Transferase</keyword>
<dbReference type="EC" id="2.1.1.-"/>
<dbReference type="EMBL" id="CP000518">
    <property type="protein sequence ID" value="ABL94012.1"/>
    <property type="molecule type" value="Genomic_DNA"/>
</dbReference>
<dbReference type="SMR" id="A1UMF4"/>
<dbReference type="STRING" id="189918.Mkms_4822"/>
<dbReference type="KEGG" id="mkm:Mkms_4822"/>
<dbReference type="HOGENOM" id="CLU_021322_0_0_11"/>
<dbReference type="OrthoDB" id="9785673at2"/>
<dbReference type="GO" id="GO:0005829">
    <property type="term" value="C:cytosol"/>
    <property type="evidence" value="ECO:0007669"/>
    <property type="project" value="TreeGrafter"/>
</dbReference>
<dbReference type="GO" id="GO:0003723">
    <property type="term" value="F:RNA binding"/>
    <property type="evidence" value="ECO:0007669"/>
    <property type="project" value="InterPro"/>
</dbReference>
<dbReference type="GO" id="GO:0008173">
    <property type="term" value="F:RNA methyltransferase activity"/>
    <property type="evidence" value="ECO:0007669"/>
    <property type="project" value="InterPro"/>
</dbReference>
<dbReference type="GO" id="GO:0032259">
    <property type="term" value="P:methylation"/>
    <property type="evidence" value="ECO:0007669"/>
    <property type="project" value="UniProtKB-KW"/>
</dbReference>
<dbReference type="GO" id="GO:0006396">
    <property type="term" value="P:RNA processing"/>
    <property type="evidence" value="ECO:0007669"/>
    <property type="project" value="InterPro"/>
</dbReference>
<dbReference type="CDD" id="cd18103">
    <property type="entry name" value="SpoU-like_RlmB"/>
    <property type="match status" value="1"/>
</dbReference>
<dbReference type="FunFam" id="3.30.1330.30:FF:000024">
    <property type="entry name" value="Putative tRNA/rRNA methyltransferase"/>
    <property type="match status" value="1"/>
</dbReference>
<dbReference type="FunFam" id="3.40.1280.10:FF:000015">
    <property type="entry name" value="Putative tRNA/rRNA methyltransferase"/>
    <property type="match status" value="1"/>
</dbReference>
<dbReference type="Gene3D" id="3.30.1330.30">
    <property type="match status" value="1"/>
</dbReference>
<dbReference type="Gene3D" id="3.40.1280.10">
    <property type="match status" value="1"/>
</dbReference>
<dbReference type="InterPro" id="IPR029028">
    <property type="entry name" value="Alpha/beta_knot_MTases"/>
</dbReference>
<dbReference type="InterPro" id="IPR029064">
    <property type="entry name" value="Ribosomal_eL30-like_sf"/>
</dbReference>
<dbReference type="InterPro" id="IPR004441">
    <property type="entry name" value="rRNA_MeTrfase_TrmH"/>
</dbReference>
<dbReference type="InterPro" id="IPR001537">
    <property type="entry name" value="SpoU_MeTrfase"/>
</dbReference>
<dbReference type="InterPro" id="IPR013123">
    <property type="entry name" value="SpoU_subst-bd"/>
</dbReference>
<dbReference type="InterPro" id="IPR029026">
    <property type="entry name" value="tRNA_m1G_MTases_N"/>
</dbReference>
<dbReference type="NCBIfam" id="TIGR00186">
    <property type="entry name" value="rRNA_methyl_3"/>
    <property type="match status" value="1"/>
</dbReference>
<dbReference type="PANTHER" id="PTHR46429">
    <property type="entry name" value="23S RRNA (GUANOSINE-2'-O-)-METHYLTRANSFERASE RLMB"/>
    <property type="match status" value="1"/>
</dbReference>
<dbReference type="PANTHER" id="PTHR46429:SF1">
    <property type="entry name" value="23S RRNA (GUANOSINE-2'-O-)-METHYLTRANSFERASE RLMB"/>
    <property type="match status" value="1"/>
</dbReference>
<dbReference type="Pfam" id="PF00588">
    <property type="entry name" value="SpoU_methylase"/>
    <property type="match status" value="1"/>
</dbReference>
<dbReference type="Pfam" id="PF08032">
    <property type="entry name" value="SpoU_sub_bind"/>
    <property type="match status" value="1"/>
</dbReference>
<dbReference type="SMART" id="SM00967">
    <property type="entry name" value="SpoU_sub_bind"/>
    <property type="match status" value="1"/>
</dbReference>
<dbReference type="SUPFAM" id="SSF75217">
    <property type="entry name" value="alpha/beta knot"/>
    <property type="match status" value="1"/>
</dbReference>
<dbReference type="SUPFAM" id="SSF55315">
    <property type="entry name" value="L30e-like"/>
    <property type="match status" value="1"/>
</dbReference>
<organism>
    <name type="scientific">Mycobacterium sp. (strain KMS)</name>
    <dbReference type="NCBI Taxonomy" id="189918"/>
    <lineage>
        <taxon>Bacteria</taxon>
        <taxon>Bacillati</taxon>
        <taxon>Actinomycetota</taxon>
        <taxon>Actinomycetes</taxon>
        <taxon>Mycobacteriales</taxon>
        <taxon>Mycobacteriaceae</taxon>
        <taxon>Mycobacterium</taxon>
    </lineage>
</organism>
<accession>A1UMF4</accession>
<evidence type="ECO:0000250" key="1"/>
<evidence type="ECO:0000256" key="2">
    <source>
        <dbReference type="SAM" id="MobiDB-lite"/>
    </source>
</evidence>
<evidence type="ECO:0000305" key="3"/>
<sequence length="314" mass="32668">MAGNSKRRGAVRKAGTKKGPTVGSGGVRRRGLEGRGATPPAHQRPNHPAAKRAAKAAKQQQRRPARKTDETELVLGRNPVVECLRAEVPATALYVAMGTEADERVTEAVQIAADNGISILEVPRSDLDRMSNNALHQGLGLQVPPYDYAHPDDLLATAKADGAPALLVALDNISDPRNLGAIVRSVAAFGGHGVLIPQRRSASVTAVAWRTSAGAAARLPVARATNLNRTLKSWADGGLQVVGLDADGDTTLDELDGTGPVVVVVGSEGKGLSRLVRENCDAVVSIPMAGPTESLNASVAAGVVLAEIARQRRS</sequence>
<protein>
    <recommendedName>
        <fullName>Uncharacterized tRNA/rRNA methyltransferase Mkms_4822</fullName>
        <ecNumber>2.1.1.-</ecNumber>
    </recommendedName>
</protein>
<gene>
    <name type="ordered locus">Mkms_4822</name>
</gene>
<name>Y4822_MYCSK</name>